<reference key="1">
    <citation type="submission" date="2009-01" db="EMBL/GenBank/DDBJ databases">
        <title>Complete sequence of chromosome of Arthrobacter chlorophenolicus A6.</title>
        <authorList>
            <consortium name="US DOE Joint Genome Institute"/>
            <person name="Lucas S."/>
            <person name="Copeland A."/>
            <person name="Lapidus A."/>
            <person name="Glavina del Rio T."/>
            <person name="Tice H."/>
            <person name="Bruce D."/>
            <person name="Goodwin L."/>
            <person name="Pitluck S."/>
            <person name="Goltsman E."/>
            <person name="Clum A."/>
            <person name="Larimer F."/>
            <person name="Land M."/>
            <person name="Hauser L."/>
            <person name="Kyrpides N."/>
            <person name="Mikhailova N."/>
            <person name="Jansson J."/>
            <person name="Richardson P."/>
        </authorList>
    </citation>
    <scope>NUCLEOTIDE SEQUENCE [LARGE SCALE GENOMIC DNA]</scope>
    <source>
        <strain>ATCC 700700 / DSM 12829 / CIP 107037 / JCM 12360 / KCTC 9906 / NCIMB 13794 / A6</strain>
    </source>
</reference>
<keyword id="KW-0067">ATP-binding</keyword>
<keyword id="KW-1003">Cell membrane</keyword>
<keyword id="KW-0963">Cytoplasm</keyword>
<keyword id="KW-0472">Membrane</keyword>
<keyword id="KW-0547">Nucleotide-binding</keyword>
<keyword id="KW-0653">Protein transport</keyword>
<keyword id="KW-1278">Translocase</keyword>
<keyword id="KW-0811">Translocation</keyword>
<keyword id="KW-0813">Transport</keyword>
<gene>
    <name evidence="1" type="primary">secA</name>
    <name type="ordered locus">Achl_2437</name>
</gene>
<feature type="chain" id="PRO_1000184213" description="Protein translocase subunit SecA">
    <location>
        <begin position="1"/>
        <end position="916"/>
    </location>
</feature>
<feature type="region of interest" description="Disordered" evidence="2">
    <location>
        <begin position="859"/>
        <end position="916"/>
    </location>
</feature>
<feature type="compositionally biased region" description="Polar residues" evidence="2">
    <location>
        <begin position="880"/>
        <end position="891"/>
    </location>
</feature>
<feature type="compositionally biased region" description="Basic and acidic residues" evidence="2">
    <location>
        <begin position="898"/>
        <end position="908"/>
    </location>
</feature>
<feature type="binding site" evidence="1">
    <location>
        <position position="86"/>
    </location>
    <ligand>
        <name>ATP</name>
        <dbReference type="ChEBI" id="CHEBI:30616"/>
    </ligand>
</feature>
<feature type="binding site" evidence="1">
    <location>
        <begin position="104"/>
        <end position="108"/>
    </location>
    <ligand>
        <name>ATP</name>
        <dbReference type="ChEBI" id="CHEBI:30616"/>
    </ligand>
</feature>
<feature type="binding site" evidence="1">
    <location>
        <position position="494"/>
    </location>
    <ligand>
        <name>ATP</name>
        <dbReference type="ChEBI" id="CHEBI:30616"/>
    </ligand>
</feature>
<organism>
    <name type="scientific">Pseudarthrobacter chlorophenolicus (strain ATCC 700700 / DSM 12829 / CIP 107037 / JCM 12360 / KCTC 9906 / NCIMB 13794 / A6)</name>
    <name type="common">Arthrobacter chlorophenolicus</name>
    <dbReference type="NCBI Taxonomy" id="452863"/>
    <lineage>
        <taxon>Bacteria</taxon>
        <taxon>Bacillati</taxon>
        <taxon>Actinomycetota</taxon>
        <taxon>Actinomycetes</taxon>
        <taxon>Micrococcales</taxon>
        <taxon>Micrococcaceae</taxon>
        <taxon>Pseudarthrobacter</taxon>
    </lineage>
</organism>
<accession>B8HBL4</accession>
<proteinExistence type="inferred from homology"/>
<comment type="function">
    <text evidence="1">Part of the Sec protein translocase complex. Interacts with the SecYEG preprotein conducting channel. Has a central role in coupling the hydrolysis of ATP to the transfer of proteins into and across the cell membrane, serving as an ATP-driven molecular motor driving the stepwise translocation of polypeptide chains across the membrane.</text>
</comment>
<comment type="catalytic activity">
    <reaction evidence="1">
        <text>ATP + H2O + cellular proteinSide 1 = ADP + phosphate + cellular proteinSide 2.</text>
        <dbReference type="EC" id="7.4.2.8"/>
    </reaction>
</comment>
<comment type="subunit">
    <text evidence="1">Monomer and homodimer. Part of the essential Sec protein translocation apparatus which comprises SecA, SecYEG and auxiliary proteins SecDF. Other proteins may also be involved.</text>
</comment>
<comment type="subcellular location">
    <subcellularLocation>
        <location evidence="1">Cell membrane</location>
        <topology evidence="1">Peripheral membrane protein</topology>
        <orientation evidence="1">Cytoplasmic side</orientation>
    </subcellularLocation>
    <subcellularLocation>
        <location evidence="1">Cytoplasm</location>
    </subcellularLocation>
    <text evidence="1">Distribution is 50-50.</text>
</comment>
<comment type="similarity">
    <text evidence="1">Belongs to the SecA family.</text>
</comment>
<evidence type="ECO:0000255" key="1">
    <source>
        <dbReference type="HAMAP-Rule" id="MF_01382"/>
    </source>
</evidence>
<evidence type="ECO:0000256" key="2">
    <source>
        <dbReference type="SAM" id="MobiDB-lite"/>
    </source>
</evidence>
<dbReference type="EC" id="7.4.2.8" evidence="1"/>
<dbReference type="EMBL" id="CP001341">
    <property type="protein sequence ID" value="ACL40402.1"/>
    <property type="molecule type" value="Genomic_DNA"/>
</dbReference>
<dbReference type="RefSeq" id="WP_015937614.1">
    <property type="nucleotide sequence ID" value="NC_011886.1"/>
</dbReference>
<dbReference type="SMR" id="B8HBL4"/>
<dbReference type="STRING" id="452863.Achl_2437"/>
<dbReference type="KEGG" id="ach:Achl_2437"/>
<dbReference type="eggNOG" id="COG0653">
    <property type="taxonomic scope" value="Bacteria"/>
</dbReference>
<dbReference type="HOGENOM" id="CLU_005314_3_0_11"/>
<dbReference type="OrthoDB" id="9805579at2"/>
<dbReference type="Proteomes" id="UP000002505">
    <property type="component" value="Chromosome"/>
</dbReference>
<dbReference type="GO" id="GO:0031522">
    <property type="term" value="C:cell envelope Sec protein transport complex"/>
    <property type="evidence" value="ECO:0007669"/>
    <property type="project" value="TreeGrafter"/>
</dbReference>
<dbReference type="GO" id="GO:0005829">
    <property type="term" value="C:cytosol"/>
    <property type="evidence" value="ECO:0007669"/>
    <property type="project" value="TreeGrafter"/>
</dbReference>
<dbReference type="GO" id="GO:0005886">
    <property type="term" value="C:plasma membrane"/>
    <property type="evidence" value="ECO:0007669"/>
    <property type="project" value="UniProtKB-SubCell"/>
</dbReference>
<dbReference type="GO" id="GO:0005524">
    <property type="term" value="F:ATP binding"/>
    <property type="evidence" value="ECO:0007669"/>
    <property type="project" value="UniProtKB-UniRule"/>
</dbReference>
<dbReference type="GO" id="GO:0008564">
    <property type="term" value="F:protein-exporting ATPase activity"/>
    <property type="evidence" value="ECO:0007669"/>
    <property type="project" value="UniProtKB-EC"/>
</dbReference>
<dbReference type="GO" id="GO:0065002">
    <property type="term" value="P:intracellular protein transmembrane transport"/>
    <property type="evidence" value="ECO:0007669"/>
    <property type="project" value="UniProtKB-UniRule"/>
</dbReference>
<dbReference type="GO" id="GO:0017038">
    <property type="term" value="P:protein import"/>
    <property type="evidence" value="ECO:0007669"/>
    <property type="project" value="InterPro"/>
</dbReference>
<dbReference type="GO" id="GO:0006605">
    <property type="term" value="P:protein targeting"/>
    <property type="evidence" value="ECO:0007669"/>
    <property type="project" value="UniProtKB-UniRule"/>
</dbReference>
<dbReference type="GO" id="GO:0043952">
    <property type="term" value="P:protein transport by the Sec complex"/>
    <property type="evidence" value="ECO:0007669"/>
    <property type="project" value="TreeGrafter"/>
</dbReference>
<dbReference type="CDD" id="cd17928">
    <property type="entry name" value="DEXDc_SecA"/>
    <property type="match status" value="1"/>
</dbReference>
<dbReference type="CDD" id="cd18803">
    <property type="entry name" value="SF2_C_secA"/>
    <property type="match status" value="1"/>
</dbReference>
<dbReference type="FunFam" id="1.10.3060.10:FF:000002">
    <property type="entry name" value="Preprotein translocase subunit SecA"/>
    <property type="match status" value="1"/>
</dbReference>
<dbReference type="FunFam" id="3.40.50.300:FF:000113">
    <property type="entry name" value="Preprotein translocase subunit SecA"/>
    <property type="match status" value="1"/>
</dbReference>
<dbReference type="FunFam" id="3.40.50.300:FF:000334">
    <property type="entry name" value="Protein translocase subunit SecA"/>
    <property type="match status" value="1"/>
</dbReference>
<dbReference type="FunFam" id="3.90.1440.10:FF:000002">
    <property type="entry name" value="Protein translocase subunit SecA"/>
    <property type="match status" value="1"/>
</dbReference>
<dbReference type="Gene3D" id="1.10.3060.10">
    <property type="entry name" value="Helical scaffold and wing domains of SecA"/>
    <property type="match status" value="1"/>
</dbReference>
<dbReference type="Gene3D" id="3.40.50.300">
    <property type="entry name" value="P-loop containing nucleotide triphosphate hydrolases"/>
    <property type="match status" value="2"/>
</dbReference>
<dbReference type="Gene3D" id="3.90.1440.10">
    <property type="entry name" value="SecA, preprotein cross-linking domain"/>
    <property type="match status" value="1"/>
</dbReference>
<dbReference type="HAMAP" id="MF_01382">
    <property type="entry name" value="SecA"/>
    <property type="match status" value="1"/>
</dbReference>
<dbReference type="InterPro" id="IPR014001">
    <property type="entry name" value="Helicase_ATP-bd"/>
</dbReference>
<dbReference type="InterPro" id="IPR001650">
    <property type="entry name" value="Helicase_C-like"/>
</dbReference>
<dbReference type="InterPro" id="IPR027417">
    <property type="entry name" value="P-loop_NTPase"/>
</dbReference>
<dbReference type="InterPro" id="IPR000185">
    <property type="entry name" value="SecA"/>
</dbReference>
<dbReference type="InterPro" id="IPR020937">
    <property type="entry name" value="SecA_CS"/>
</dbReference>
<dbReference type="InterPro" id="IPR011115">
    <property type="entry name" value="SecA_DEAD"/>
</dbReference>
<dbReference type="InterPro" id="IPR014018">
    <property type="entry name" value="SecA_motor_DEAD"/>
</dbReference>
<dbReference type="InterPro" id="IPR011130">
    <property type="entry name" value="SecA_preprotein_X-link_dom"/>
</dbReference>
<dbReference type="InterPro" id="IPR044722">
    <property type="entry name" value="SecA_SF2_C"/>
</dbReference>
<dbReference type="InterPro" id="IPR011116">
    <property type="entry name" value="SecA_Wing/Scaffold"/>
</dbReference>
<dbReference type="InterPro" id="IPR036266">
    <property type="entry name" value="SecA_Wing/Scaffold_sf"/>
</dbReference>
<dbReference type="InterPro" id="IPR036670">
    <property type="entry name" value="SecA_X-link_sf"/>
</dbReference>
<dbReference type="NCBIfam" id="NF009538">
    <property type="entry name" value="PRK12904.1"/>
    <property type="match status" value="1"/>
</dbReference>
<dbReference type="NCBIfam" id="TIGR00963">
    <property type="entry name" value="secA"/>
    <property type="match status" value="1"/>
</dbReference>
<dbReference type="PANTHER" id="PTHR30612:SF0">
    <property type="entry name" value="CHLOROPLAST PROTEIN-TRANSPORTING ATPASE"/>
    <property type="match status" value="1"/>
</dbReference>
<dbReference type="PANTHER" id="PTHR30612">
    <property type="entry name" value="SECA INNER MEMBRANE COMPONENT OF SEC PROTEIN SECRETION SYSTEM"/>
    <property type="match status" value="1"/>
</dbReference>
<dbReference type="Pfam" id="PF21090">
    <property type="entry name" value="P-loop_SecA"/>
    <property type="match status" value="1"/>
</dbReference>
<dbReference type="Pfam" id="PF07517">
    <property type="entry name" value="SecA_DEAD"/>
    <property type="match status" value="1"/>
</dbReference>
<dbReference type="Pfam" id="PF01043">
    <property type="entry name" value="SecA_PP_bind"/>
    <property type="match status" value="1"/>
</dbReference>
<dbReference type="Pfam" id="PF07516">
    <property type="entry name" value="SecA_SW"/>
    <property type="match status" value="1"/>
</dbReference>
<dbReference type="PRINTS" id="PR00906">
    <property type="entry name" value="SECA"/>
</dbReference>
<dbReference type="SMART" id="SM00957">
    <property type="entry name" value="SecA_DEAD"/>
    <property type="match status" value="1"/>
</dbReference>
<dbReference type="SMART" id="SM00958">
    <property type="entry name" value="SecA_PP_bind"/>
    <property type="match status" value="1"/>
</dbReference>
<dbReference type="SUPFAM" id="SSF81886">
    <property type="entry name" value="Helical scaffold and wing domains of SecA"/>
    <property type="match status" value="1"/>
</dbReference>
<dbReference type="SUPFAM" id="SSF52540">
    <property type="entry name" value="P-loop containing nucleoside triphosphate hydrolases"/>
    <property type="match status" value="2"/>
</dbReference>
<dbReference type="SUPFAM" id="SSF81767">
    <property type="entry name" value="Pre-protein crosslinking domain of SecA"/>
    <property type="match status" value="1"/>
</dbReference>
<dbReference type="PROSITE" id="PS01312">
    <property type="entry name" value="SECA"/>
    <property type="match status" value="1"/>
</dbReference>
<dbReference type="PROSITE" id="PS51196">
    <property type="entry name" value="SECA_MOTOR_DEAD"/>
    <property type="match status" value="1"/>
</dbReference>
<name>SECA_PSECP</name>
<sequence>MASLIEKLLRTGDKKTLRQLRNYADSINALEDSFKTFTDAELREETDRLRERHQDGEKLDNLLPEAFAAVREASSRTLGMRHFDVQLMGGAALHLGNIAEMKTGEGKTLVATAPAYLNALTGKGVHVVTVNDYLAEYQSDLMGRVYRFLGLTSGCILANQDPAVRREQYAADITYGTNNEFGFDYLRDNMAWDRNELVQRGHNFAIVDEVDSILIDEARTPLIISGPAQGDTNRWYSEFAKVVLRLQPEKDYEVDEKKRTVGVLEGGIEKVEDYLGISNLYESANTPLIGFLNNAIKAKELFKRDKDYVIMDGEVLIVDEHTGRILAGRRYNEGMHQAIEAKEGVEIKAENQTLATVTLQNYFRMYGKLSGMTGTAETEAAEFMSTYKLGVVAIPTNRDMQRIDQSDLVFKNETVKFDAVVRDIAERHEKGQPVLVGTTSVEKSEYLSRLLAKDGIRHEVLNAKNHAREAAIVAQAGRKAAVTVATNMAGRGTDIMLGGNAEFTAVAELAKRGLDPEENSEEYESAWPAALEAAKQAVKDEHEEVLNLGGLYVLGTERHESRRIDNQLRGRSGRQGDPGESRFYLSLTDDLMRLFNSGAAERLMNSSVPDDVALESKLVSRAIASAQGQVEGRNAEQRKNVLKYDDVLNRQREAIYSDRRRILEGDDLHEKVQFFVEDTIMALIDDATAGGNGDDWDFHQLWTNLKTLYPVSVSADDIIEEAGGKSRLTVEFLKEELLSDARLVYQAREESIGSESMRELERRVVLSVIGRKWQEHLYEMDYLKEGIGLRAMAQRDPLVEYQREGFTLFQSMMEAIREESVGFLFNLEVEVTPAQDVVVEDAAGGHTEHVEPQVRAAGLEAPEKPAQLQYTAPSEGGGTQTRVETRSTGRSGNPAKAAEQDAAKDAAKRPAKKKRR</sequence>
<protein>
    <recommendedName>
        <fullName evidence="1">Protein translocase subunit SecA</fullName>
        <ecNumber evidence="1">7.4.2.8</ecNumber>
    </recommendedName>
</protein>